<keyword id="KW-0004">4Fe-4S</keyword>
<keyword id="KW-0067">ATP-binding</keyword>
<keyword id="KW-0963">Cytoplasm</keyword>
<keyword id="KW-0408">Iron</keyword>
<keyword id="KW-0411">Iron-sulfur</keyword>
<keyword id="KW-0479">Metal-binding</keyword>
<keyword id="KW-0547">Nucleotide-binding</keyword>
<keyword id="KW-1185">Reference proteome</keyword>
<reference key="1">
    <citation type="journal article" date="2005" name="Nature">
        <title>Sequencing of Aspergillus nidulans and comparative analysis with A. fumigatus and A. oryzae.</title>
        <authorList>
            <person name="Galagan J.E."/>
            <person name="Calvo S.E."/>
            <person name="Cuomo C."/>
            <person name="Ma L.-J."/>
            <person name="Wortman J.R."/>
            <person name="Batzoglou S."/>
            <person name="Lee S.-I."/>
            <person name="Bastuerkmen M."/>
            <person name="Spevak C.C."/>
            <person name="Clutterbuck J."/>
            <person name="Kapitonov V."/>
            <person name="Jurka J."/>
            <person name="Scazzocchio C."/>
            <person name="Farman M.L."/>
            <person name="Butler J."/>
            <person name="Purcell S."/>
            <person name="Harris S."/>
            <person name="Braus G.H."/>
            <person name="Draht O."/>
            <person name="Busch S."/>
            <person name="D'Enfert C."/>
            <person name="Bouchier C."/>
            <person name="Goldman G.H."/>
            <person name="Bell-Pedersen D."/>
            <person name="Griffiths-Jones S."/>
            <person name="Doonan J.H."/>
            <person name="Yu J."/>
            <person name="Vienken K."/>
            <person name="Pain A."/>
            <person name="Freitag M."/>
            <person name="Selker E.U."/>
            <person name="Archer D.B."/>
            <person name="Penalva M.A."/>
            <person name="Oakley B.R."/>
            <person name="Momany M."/>
            <person name="Tanaka T."/>
            <person name="Kumagai T."/>
            <person name="Asai K."/>
            <person name="Machida M."/>
            <person name="Nierman W.C."/>
            <person name="Denning D.W."/>
            <person name="Caddick M.X."/>
            <person name="Hynes M."/>
            <person name="Paoletti M."/>
            <person name="Fischer R."/>
            <person name="Miller B.L."/>
            <person name="Dyer P.S."/>
            <person name="Sachs M.S."/>
            <person name="Osmani S.A."/>
            <person name="Birren B.W."/>
        </authorList>
    </citation>
    <scope>NUCLEOTIDE SEQUENCE [LARGE SCALE GENOMIC DNA]</scope>
    <source>
        <strain>FGSC A4 / ATCC 38163 / CBS 112.46 / NRRL 194 / M139</strain>
    </source>
</reference>
<reference key="2">
    <citation type="journal article" date="2009" name="Fungal Genet. Biol.">
        <title>The 2008 update of the Aspergillus nidulans genome annotation: a community effort.</title>
        <authorList>
            <person name="Wortman J.R."/>
            <person name="Gilsenan J.M."/>
            <person name="Joardar V."/>
            <person name="Deegan J."/>
            <person name="Clutterbuck J."/>
            <person name="Andersen M.R."/>
            <person name="Archer D."/>
            <person name="Bencina M."/>
            <person name="Braus G."/>
            <person name="Coutinho P."/>
            <person name="von Dohren H."/>
            <person name="Doonan J."/>
            <person name="Driessen A.J."/>
            <person name="Durek P."/>
            <person name="Espeso E."/>
            <person name="Fekete E."/>
            <person name="Flipphi M."/>
            <person name="Estrada C.G."/>
            <person name="Geysens S."/>
            <person name="Goldman G."/>
            <person name="de Groot P.W."/>
            <person name="Hansen K."/>
            <person name="Harris S.D."/>
            <person name="Heinekamp T."/>
            <person name="Helmstaedt K."/>
            <person name="Henrissat B."/>
            <person name="Hofmann G."/>
            <person name="Homan T."/>
            <person name="Horio T."/>
            <person name="Horiuchi H."/>
            <person name="James S."/>
            <person name="Jones M."/>
            <person name="Karaffa L."/>
            <person name="Karanyi Z."/>
            <person name="Kato M."/>
            <person name="Keller N."/>
            <person name="Kelly D.E."/>
            <person name="Kiel J.A."/>
            <person name="Kim J.M."/>
            <person name="van der Klei I.J."/>
            <person name="Klis F.M."/>
            <person name="Kovalchuk A."/>
            <person name="Krasevec N."/>
            <person name="Kubicek C.P."/>
            <person name="Liu B."/>
            <person name="Maccabe A."/>
            <person name="Meyer V."/>
            <person name="Mirabito P."/>
            <person name="Miskei M."/>
            <person name="Mos M."/>
            <person name="Mullins J."/>
            <person name="Nelson D.R."/>
            <person name="Nielsen J."/>
            <person name="Oakley B.R."/>
            <person name="Osmani S.A."/>
            <person name="Pakula T."/>
            <person name="Paszewski A."/>
            <person name="Paulsen I."/>
            <person name="Pilsyk S."/>
            <person name="Pocsi I."/>
            <person name="Punt P.J."/>
            <person name="Ram A.F."/>
            <person name="Ren Q."/>
            <person name="Robellet X."/>
            <person name="Robson G."/>
            <person name="Seiboth B."/>
            <person name="van Solingen P."/>
            <person name="Specht T."/>
            <person name="Sun J."/>
            <person name="Taheri-Talesh N."/>
            <person name="Takeshita N."/>
            <person name="Ussery D."/>
            <person name="vanKuyk P.A."/>
            <person name="Visser H."/>
            <person name="van de Vondervoort P.J."/>
            <person name="de Vries R.P."/>
            <person name="Walton J."/>
            <person name="Xiang X."/>
            <person name="Xiong Y."/>
            <person name="Zeng A.P."/>
            <person name="Brandt B.W."/>
            <person name="Cornell M.J."/>
            <person name="van den Hondel C.A."/>
            <person name="Visser J."/>
            <person name="Oliver S.G."/>
            <person name="Turner G."/>
        </authorList>
    </citation>
    <scope>GENOME REANNOTATION</scope>
    <source>
        <strain>FGSC A4 / ATCC 38163 / CBS 112.46 / NRRL 194 / M139</strain>
    </source>
</reference>
<accession>P0C8Q1</accession>
<accession>C8V7E8</accession>
<accession>Q5AU02</accession>
<organism>
    <name type="scientific">Emericella nidulans (strain FGSC A4 / ATCC 38163 / CBS 112.46 / NRRL 194 / M139)</name>
    <name type="common">Aspergillus nidulans</name>
    <dbReference type="NCBI Taxonomy" id="227321"/>
    <lineage>
        <taxon>Eukaryota</taxon>
        <taxon>Fungi</taxon>
        <taxon>Dikarya</taxon>
        <taxon>Ascomycota</taxon>
        <taxon>Pezizomycotina</taxon>
        <taxon>Eurotiomycetes</taxon>
        <taxon>Eurotiomycetidae</taxon>
        <taxon>Eurotiales</taxon>
        <taxon>Aspergillaceae</taxon>
        <taxon>Aspergillus</taxon>
        <taxon>Aspergillus subgen. Nidulantes</taxon>
    </lineage>
</organism>
<proteinExistence type="inferred from homology"/>
<dbReference type="EMBL" id="AACD01000144">
    <property type="protein sequence ID" value="EAA58884.1"/>
    <property type="status" value="ALT_SEQ"/>
    <property type="molecule type" value="Genomic_DNA"/>
</dbReference>
<dbReference type="EMBL" id="BN001302">
    <property type="protein sequence ID" value="CBF74155.1"/>
    <property type="molecule type" value="Genomic_DNA"/>
</dbReference>
<dbReference type="SMR" id="P0C8Q1"/>
<dbReference type="FunCoup" id="P0C8Q1">
    <property type="interactions" value="150"/>
</dbReference>
<dbReference type="STRING" id="227321.P0C8Q1"/>
<dbReference type="EnsemblFungi" id="CBF74155">
    <property type="protein sequence ID" value="CBF74155"/>
    <property type="gene ID" value="ANIA_11060"/>
</dbReference>
<dbReference type="VEuPathDB" id="FungiDB:AN11060"/>
<dbReference type="eggNOG" id="KOG3022">
    <property type="taxonomic scope" value="Eukaryota"/>
</dbReference>
<dbReference type="HOGENOM" id="CLU_391091_0_0_1"/>
<dbReference type="InParanoid" id="P0C8Q1"/>
<dbReference type="OMA" id="WIPVFAD"/>
<dbReference type="OrthoDB" id="3900342at2759"/>
<dbReference type="Proteomes" id="UP000000560">
    <property type="component" value="Chromosome II"/>
</dbReference>
<dbReference type="GO" id="GO:0005829">
    <property type="term" value="C:cytosol"/>
    <property type="evidence" value="ECO:0000318"/>
    <property type="project" value="GO_Central"/>
</dbReference>
<dbReference type="GO" id="GO:1904564">
    <property type="term" value="C:cytosolic [4Fe-4S] assembly scaffold complex"/>
    <property type="evidence" value="ECO:0007669"/>
    <property type="project" value="EnsemblFungi"/>
</dbReference>
<dbReference type="GO" id="GO:0051539">
    <property type="term" value="F:4 iron, 4 sulfur cluster binding"/>
    <property type="evidence" value="ECO:0007669"/>
    <property type="project" value="UniProtKB-UniRule"/>
</dbReference>
<dbReference type="GO" id="GO:0005524">
    <property type="term" value="F:ATP binding"/>
    <property type="evidence" value="ECO:0007669"/>
    <property type="project" value="UniProtKB-KW"/>
</dbReference>
<dbReference type="GO" id="GO:0016887">
    <property type="term" value="F:ATP hydrolysis activity"/>
    <property type="evidence" value="ECO:0007669"/>
    <property type="project" value="EnsemblFungi"/>
</dbReference>
<dbReference type="GO" id="GO:0140663">
    <property type="term" value="F:ATP-dependent FeS chaperone activity"/>
    <property type="evidence" value="ECO:0007669"/>
    <property type="project" value="InterPro"/>
</dbReference>
<dbReference type="GO" id="GO:0051536">
    <property type="term" value="F:iron-sulfur cluster binding"/>
    <property type="evidence" value="ECO:0000318"/>
    <property type="project" value="GO_Central"/>
</dbReference>
<dbReference type="GO" id="GO:0046872">
    <property type="term" value="F:metal ion binding"/>
    <property type="evidence" value="ECO:0007669"/>
    <property type="project" value="UniProtKB-KW"/>
</dbReference>
<dbReference type="GO" id="GO:0016226">
    <property type="term" value="P:iron-sulfur cluster assembly"/>
    <property type="evidence" value="ECO:0000318"/>
    <property type="project" value="GO_Central"/>
</dbReference>
<dbReference type="GO" id="GO:0002098">
    <property type="term" value="P:tRNA wobble uridine modification"/>
    <property type="evidence" value="ECO:0007669"/>
    <property type="project" value="EnsemblFungi"/>
</dbReference>
<dbReference type="CDD" id="cd02037">
    <property type="entry name" value="Mrp_NBP35"/>
    <property type="match status" value="1"/>
</dbReference>
<dbReference type="FunFam" id="3.40.50.300:FF:001300">
    <property type="entry name" value="Cytosolic Fe-S cluster assembly factor CFD1"/>
    <property type="match status" value="1"/>
</dbReference>
<dbReference type="Gene3D" id="3.40.50.300">
    <property type="entry name" value="P-loop containing nucleotide triphosphate hydrolases"/>
    <property type="match status" value="1"/>
</dbReference>
<dbReference type="HAMAP" id="MF_02040">
    <property type="entry name" value="Mrp_NBP35"/>
    <property type="match status" value="1"/>
</dbReference>
<dbReference type="HAMAP" id="MF_03039">
    <property type="entry name" value="NUBP2"/>
    <property type="match status" value="1"/>
</dbReference>
<dbReference type="InterPro" id="IPR019591">
    <property type="entry name" value="Mrp/NBP35_ATP-bd"/>
</dbReference>
<dbReference type="InterPro" id="IPR028600">
    <property type="entry name" value="NUBP2/Cfd1_eukaryotes"/>
</dbReference>
<dbReference type="InterPro" id="IPR027417">
    <property type="entry name" value="P-loop_NTPase"/>
</dbReference>
<dbReference type="InterPro" id="IPR033756">
    <property type="entry name" value="YlxH/NBP35"/>
</dbReference>
<dbReference type="PANTHER" id="PTHR23264:SF19">
    <property type="entry name" value="CYTOSOLIC FE-S CLUSTER ASSEMBLY FACTOR NUBP2"/>
    <property type="match status" value="1"/>
</dbReference>
<dbReference type="PANTHER" id="PTHR23264">
    <property type="entry name" value="NUCLEOTIDE-BINDING PROTEIN NBP35 YEAST -RELATED"/>
    <property type="match status" value="1"/>
</dbReference>
<dbReference type="Pfam" id="PF10609">
    <property type="entry name" value="ParA"/>
    <property type="match status" value="2"/>
</dbReference>
<dbReference type="SUPFAM" id="SSF52540">
    <property type="entry name" value="P-loop containing nucleoside triphosphate hydrolases"/>
    <property type="match status" value="1"/>
</dbReference>
<comment type="function">
    <text evidence="1">Component of the cytosolic iron-sulfur (Fe/S) protein assembly (CIA) machinery. Required for maturation of extramitochondrial Fe-S proteins. The nbp35-cfd1 heterotetramer forms a Fe-S scaffold complex, mediating the de novo assembly of an Fe-S cluster and its transfer to target apoproteins.</text>
</comment>
<comment type="cofactor">
    <cofactor evidence="1">
        <name>[4Fe-4S] cluster</name>
        <dbReference type="ChEBI" id="CHEBI:49883"/>
    </cofactor>
    <text evidence="1">Binds 4 [4Fe-4S] clusters per heterotetramer. Contains two stable clusters in the N-termini of nbp35 and two labile, bridging clusters between subunits of the nbp35-cfd1 heterotetramer.</text>
</comment>
<comment type="subunit">
    <text evidence="1">Heterotetramer of 2 nbp35 and 2 cfd1 chains.</text>
</comment>
<comment type="subcellular location">
    <subcellularLocation>
        <location evidence="1">Cytoplasm</location>
    </subcellularLocation>
</comment>
<comment type="similarity">
    <text evidence="1">Belongs to the Mrp/NBP35 ATP-binding proteins family. NUBP2/CFD1 subfamily.</text>
</comment>
<comment type="sequence caution" evidence="3">
    <conflict type="erroneous gene model prediction">
        <sequence resource="EMBL-CDS" id="EAA58884"/>
    </conflict>
    <text>The predicted gene AN8228 has been split into 2 genes: AN11055 and AN11060.</text>
</comment>
<name>CFD1_EMENI</name>
<evidence type="ECO:0000255" key="1">
    <source>
        <dbReference type="HAMAP-Rule" id="MF_03039"/>
    </source>
</evidence>
<evidence type="ECO:0000256" key="2">
    <source>
        <dbReference type="SAM" id="MobiDB-lite"/>
    </source>
</evidence>
<evidence type="ECO:0000305" key="3"/>
<gene>
    <name type="primary">cfd1</name>
    <name type="ORF">AN11060</name>
</gene>
<sequence>MPLEGIKNIILILSGKGGVGKSSVTLQLALALTLQGKSVGVLDIDLTGPSIPRLVGLEGAKITQSSNGWVPVPVHEAEAQTASGNDAAVALSDDGGDENKDVERAKPRGSLRCMSLGFLLRDRGDAVIWRGPKKTAMIRQFLTDVYWGDTDYLLVDTPPGTSDEHIALAEELLKLSTTSPSSTGVGALPRLTGAVLVTTPQAIATSDVRKEVNFCVKTNIPTLGVIENMSGYTCPCCGEVSNLFSSGGGEVMAREMGVRFLGKVPVDVQFGALVEGKSQEESDDEDEDRERNKVEEEKGQDFVDERPLVERYKECWSYGQFEGFAKTLIGEIEG</sequence>
<protein>
    <recommendedName>
        <fullName evidence="1">Cytosolic Fe-S cluster assembly factor cfd1</fullName>
    </recommendedName>
    <alternativeName>
        <fullName evidence="1">Cytosolic Fe-S cluster-deficient protein 1</fullName>
    </alternativeName>
</protein>
<feature type="chain" id="PRO_0000363398" description="Cytosolic Fe-S cluster assembly factor cfd1">
    <location>
        <begin position="1"/>
        <end position="334"/>
    </location>
</feature>
<feature type="region of interest" description="Disordered" evidence="2">
    <location>
        <begin position="274"/>
        <end position="302"/>
    </location>
</feature>
<feature type="compositionally biased region" description="Basic and acidic residues" evidence="2">
    <location>
        <begin position="289"/>
        <end position="302"/>
    </location>
</feature>
<feature type="binding site" evidence="1">
    <location>
        <begin position="15"/>
        <end position="22"/>
    </location>
    <ligand>
        <name>ATP</name>
        <dbReference type="ChEBI" id="CHEBI:30616"/>
    </ligand>
</feature>
<feature type="binding site" evidence="1">
    <location>
        <position position="234"/>
    </location>
    <ligand>
        <name>[4Fe-4S] cluster</name>
        <dbReference type="ChEBI" id="CHEBI:49883"/>
        <note>ligand shared between dimeric partners</note>
    </ligand>
</feature>
<feature type="binding site" evidence="1">
    <location>
        <position position="237"/>
    </location>
    <ligand>
        <name>[4Fe-4S] cluster</name>
        <dbReference type="ChEBI" id="CHEBI:49883"/>
        <note>ligand shared between dimeric partners</note>
    </ligand>
</feature>